<proteinExistence type="inferred from homology"/>
<accession>A4SHZ5</accession>
<organism>
    <name type="scientific">Aeromonas salmonicida (strain A449)</name>
    <dbReference type="NCBI Taxonomy" id="382245"/>
    <lineage>
        <taxon>Bacteria</taxon>
        <taxon>Pseudomonadati</taxon>
        <taxon>Pseudomonadota</taxon>
        <taxon>Gammaproteobacteria</taxon>
        <taxon>Aeromonadales</taxon>
        <taxon>Aeromonadaceae</taxon>
        <taxon>Aeromonas</taxon>
    </lineage>
</organism>
<evidence type="ECO:0000255" key="1">
    <source>
        <dbReference type="HAMAP-Rule" id="MF_00532"/>
    </source>
</evidence>
<evidence type="ECO:0000305" key="2"/>
<keyword id="KW-0687">Ribonucleoprotein</keyword>
<keyword id="KW-0689">Ribosomal protein</keyword>
<reference key="1">
    <citation type="journal article" date="2008" name="BMC Genomics">
        <title>The genome of Aeromonas salmonicida subsp. salmonicida A449: insights into the evolution of a fish pathogen.</title>
        <authorList>
            <person name="Reith M.E."/>
            <person name="Singh R.K."/>
            <person name="Curtis B."/>
            <person name="Boyd J.M."/>
            <person name="Bouevitch A."/>
            <person name="Kimball J."/>
            <person name="Munholland J."/>
            <person name="Murphy C."/>
            <person name="Sarty D."/>
            <person name="Williams J."/>
            <person name="Nash J.H."/>
            <person name="Johnson S.C."/>
            <person name="Brown L.L."/>
        </authorList>
    </citation>
    <scope>NUCLEOTIDE SEQUENCE [LARGE SCALE GENOMIC DNA]</scope>
    <source>
        <strain>A449</strain>
    </source>
</reference>
<comment type="similarity">
    <text evidence="1">Belongs to the universal ribosomal protein uS9 family.</text>
</comment>
<name>RS9_AERS4</name>
<dbReference type="EMBL" id="CP000644">
    <property type="protein sequence ID" value="ABO88517.1"/>
    <property type="molecule type" value="Genomic_DNA"/>
</dbReference>
<dbReference type="RefSeq" id="WP_005314365.1">
    <property type="nucleotide sequence ID" value="NC_009348.1"/>
</dbReference>
<dbReference type="SMR" id="A4SHZ5"/>
<dbReference type="STRING" id="29491.GCA_000820065_03358"/>
<dbReference type="GeneID" id="79877912"/>
<dbReference type="KEGG" id="asa:ASA_0334"/>
<dbReference type="eggNOG" id="COG0103">
    <property type="taxonomic scope" value="Bacteria"/>
</dbReference>
<dbReference type="HOGENOM" id="CLU_046483_2_1_6"/>
<dbReference type="Proteomes" id="UP000000225">
    <property type="component" value="Chromosome"/>
</dbReference>
<dbReference type="GO" id="GO:0022627">
    <property type="term" value="C:cytosolic small ribosomal subunit"/>
    <property type="evidence" value="ECO:0007669"/>
    <property type="project" value="TreeGrafter"/>
</dbReference>
<dbReference type="GO" id="GO:0003723">
    <property type="term" value="F:RNA binding"/>
    <property type="evidence" value="ECO:0007669"/>
    <property type="project" value="TreeGrafter"/>
</dbReference>
<dbReference type="GO" id="GO:0003735">
    <property type="term" value="F:structural constituent of ribosome"/>
    <property type="evidence" value="ECO:0007669"/>
    <property type="project" value="InterPro"/>
</dbReference>
<dbReference type="GO" id="GO:0006412">
    <property type="term" value="P:translation"/>
    <property type="evidence" value="ECO:0007669"/>
    <property type="project" value="UniProtKB-UniRule"/>
</dbReference>
<dbReference type="FunFam" id="3.30.230.10:FF:000001">
    <property type="entry name" value="30S ribosomal protein S9"/>
    <property type="match status" value="1"/>
</dbReference>
<dbReference type="Gene3D" id="3.30.230.10">
    <property type="match status" value="1"/>
</dbReference>
<dbReference type="HAMAP" id="MF_00532_B">
    <property type="entry name" value="Ribosomal_uS9_B"/>
    <property type="match status" value="1"/>
</dbReference>
<dbReference type="InterPro" id="IPR020568">
    <property type="entry name" value="Ribosomal_Su5_D2-typ_SF"/>
</dbReference>
<dbReference type="InterPro" id="IPR000754">
    <property type="entry name" value="Ribosomal_uS9"/>
</dbReference>
<dbReference type="InterPro" id="IPR023035">
    <property type="entry name" value="Ribosomal_uS9_bac/plastid"/>
</dbReference>
<dbReference type="InterPro" id="IPR020574">
    <property type="entry name" value="Ribosomal_uS9_CS"/>
</dbReference>
<dbReference type="InterPro" id="IPR014721">
    <property type="entry name" value="Ribsml_uS5_D2-typ_fold_subgr"/>
</dbReference>
<dbReference type="NCBIfam" id="NF001099">
    <property type="entry name" value="PRK00132.1"/>
    <property type="match status" value="1"/>
</dbReference>
<dbReference type="PANTHER" id="PTHR21569">
    <property type="entry name" value="RIBOSOMAL PROTEIN S9"/>
    <property type="match status" value="1"/>
</dbReference>
<dbReference type="PANTHER" id="PTHR21569:SF1">
    <property type="entry name" value="SMALL RIBOSOMAL SUBUNIT PROTEIN US9M"/>
    <property type="match status" value="1"/>
</dbReference>
<dbReference type="Pfam" id="PF00380">
    <property type="entry name" value="Ribosomal_S9"/>
    <property type="match status" value="1"/>
</dbReference>
<dbReference type="SUPFAM" id="SSF54211">
    <property type="entry name" value="Ribosomal protein S5 domain 2-like"/>
    <property type="match status" value="1"/>
</dbReference>
<dbReference type="PROSITE" id="PS00360">
    <property type="entry name" value="RIBOSOMAL_S9"/>
    <property type="match status" value="1"/>
</dbReference>
<sequence length="130" mass="14769">MAENQYYGTGRRKSSTARVFIKAGSGKIVINQRSLEQYFGRPTARMVVRQPLELVEMTEKLDLYITVNGGGISGQAGAIRHGITRALMQYDETLRAELRKAGFVTRDARKVERKKVGLHKARKRPQYSKR</sequence>
<gene>
    <name evidence="1" type="primary">rpsI</name>
    <name type="ordered locus">ASA_0334</name>
</gene>
<protein>
    <recommendedName>
        <fullName evidence="1">Small ribosomal subunit protein uS9</fullName>
    </recommendedName>
    <alternativeName>
        <fullName evidence="2">30S ribosomal protein S9</fullName>
    </alternativeName>
</protein>
<feature type="chain" id="PRO_1000051151" description="Small ribosomal subunit protein uS9">
    <location>
        <begin position="1"/>
        <end position="130"/>
    </location>
</feature>